<feature type="chain" id="PRO_0000391985" description="Ubiquitin-fold modifier 1">
    <location>
        <begin position="1"/>
        <end position="83"/>
    </location>
</feature>
<feature type="propeptide" id="PRO_0000391986" description="Removed in mature form" evidence="1">
    <location>
        <begin position="84"/>
        <end position="91"/>
    </location>
</feature>
<feature type="cross-link" description="Glycyl lysine isopeptide (Lys-Gly) (interchain with G-Cter in UFM1)" evidence="1">
    <location>
        <position position="69"/>
    </location>
</feature>
<feature type="cross-link" description="Glycyl lysine isopeptide (Gly-Lys) (interchain with K-? in acceptor proteins)" evidence="1">
    <location>
        <position position="83"/>
    </location>
</feature>
<sequence length="91" mass="9785">MSKVTFKITLTSDPRLPYKVLSVPESTPFTAVLKFAAEEFKVPAATSAIITNDGIGINPAQTAGNVFLKHGSELRIIPRDRVGGRGLYLSP</sequence>
<reference key="1">
    <citation type="submission" date="2009-03" db="EMBL/GenBank/DDBJ databases">
        <title>Osmerus mordax full-length cDNAs.</title>
        <authorList>
            <person name="von Schalburg K."/>
            <person name="Leong J."/>
            <person name="Cooper G."/>
            <person name="Davidson W.S."/>
            <person name="Koop B.F."/>
        </authorList>
    </citation>
    <scope>NUCLEOTIDE SEQUENCE [LARGE SCALE MRNA]</scope>
    <source>
        <tissue>Brain</tissue>
    </source>
</reference>
<comment type="function">
    <text evidence="1">Ubiquitin-like modifier which can be covalently attached via an isopeptide bond to lysine residues of substrate proteins as a monomer or a lysine-linked polymer. The so-called ufmylation, requires the ufm1-activating E1 enzyme uba5, the ufm1-conjugating E2 enzyme ufc1, and the ufm1-ligase E3 enzyme ufl1. Ufmylation is involved in various processes, such as ribosome recycling, response to DNA damage, transcription or reticulophagy (also called ER-phagy) induced in response to endoplasmic reticulum stress.</text>
</comment>
<comment type="subunit">
    <text evidence="1">Interacts with uba5. Interacts with ufc1.</text>
</comment>
<comment type="subcellular location">
    <subcellularLocation>
        <location evidence="1">Nucleus</location>
    </subcellularLocation>
    <subcellularLocation>
        <location evidence="1">Cytoplasm</location>
    </subcellularLocation>
</comment>
<comment type="PTM">
    <text evidence="1">UFM1 precursor is cleaved by UFSP1, promoting its maturation: processing of the C-terminal Ser-Cys dipeptide is required to expose its C-terminal conserved Gly residue.</text>
</comment>
<comment type="similarity">
    <text evidence="2">Belongs to the UFM1 family.</text>
</comment>
<comment type="sequence caution" evidence="2">
    <conflict type="erroneous initiation">
        <sequence resource="EMBL-CDS" id="ACO09894"/>
    </conflict>
</comment>
<comment type="sequence caution" evidence="2">
    <conflict type="erroneous initiation">
        <sequence resource="EMBL-CDS" id="ACO10138"/>
    </conflict>
</comment>
<proteinExistence type="inferred from homology"/>
<gene>
    <name evidence="1" type="primary">ufm1</name>
</gene>
<name>UFM1_OSMMO</name>
<organism>
    <name type="scientific">Osmerus mordax</name>
    <name type="common">Rainbow smelt</name>
    <name type="synonym">Atherina mordax</name>
    <dbReference type="NCBI Taxonomy" id="8014"/>
    <lineage>
        <taxon>Eukaryota</taxon>
        <taxon>Metazoa</taxon>
        <taxon>Chordata</taxon>
        <taxon>Craniata</taxon>
        <taxon>Vertebrata</taxon>
        <taxon>Euteleostomi</taxon>
        <taxon>Actinopterygii</taxon>
        <taxon>Neopterygii</taxon>
        <taxon>Teleostei</taxon>
        <taxon>Stomiati</taxon>
        <taxon>Osmeriformes</taxon>
        <taxon>Osmeridae</taxon>
        <taxon>Osmerus</taxon>
    </lineage>
</organism>
<accession>C1BJ98</accession>
<accession>C1BLJ1</accession>
<protein>
    <recommendedName>
        <fullName evidence="1">Ubiquitin-fold modifier 1</fullName>
    </recommendedName>
</protein>
<keyword id="KW-0963">Cytoplasm</keyword>
<keyword id="KW-1017">Isopeptide bond</keyword>
<keyword id="KW-0539">Nucleus</keyword>
<keyword id="KW-0832">Ubl conjugation</keyword>
<keyword id="KW-0833">Ubl conjugation pathway</keyword>
<dbReference type="EMBL" id="BT074677">
    <property type="protein sequence ID" value="ACO09101.1"/>
    <property type="molecule type" value="mRNA"/>
</dbReference>
<dbReference type="EMBL" id="BT075470">
    <property type="protein sequence ID" value="ACO09894.1"/>
    <property type="status" value="ALT_INIT"/>
    <property type="molecule type" value="mRNA"/>
</dbReference>
<dbReference type="EMBL" id="BT075714">
    <property type="protein sequence ID" value="ACO10138.1"/>
    <property type="status" value="ALT_INIT"/>
    <property type="molecule type" value="mRNA"/>
</dbReference>
<dbReference type="RefSeq" id="XP_067085136.1">
    <property type="nucleotide sequence ID" value="XM_067229035.1"/>
</dbReference>
<dbReference type="SMR" id="C1BJ98"/>
<dbReference type="GeneID" id="136933582"/>
<dbReference type="GO" id="GO:0005737">
    <property type="term" value="C:cytoplasm"/>
    <property type="evidence" value="ECO:0000250"/>
    <property type="project" value="UniProtKB"/>
</dbReference>
<dbReference type="GO" id="GO:0005634">
    <property type="term" value="C:nucleus"/>
    <property type="evidence" value="ECO:0000250"/>
    <property type="project" value="UniProtKB"/>
</dbReference>
<dbReference type="GO" id="GO:1990592">
    <property type="term" value="P:protein K69-linked ufmylation"/>
    <property type="evidence" value="ECO:0000250"/>
    <property type="project" value="UniProtKB"/>
</dbReference>
<dbReference type="GO" id="GO:0071569">
    <property type="term" value="P:protein ufmylation"/>
    <property type="evidence" value="ECO:0000250"/>
    <property type="project" value="UniProtKB"/>
</dbReference>
<dbReference type="GO" id="GO:0034976">
    <property type="term" value="P:response to endoplasmic reticulum stress"/>
    <property type="evidence" value="ECO:0000250"/>
    <property type="project" value="UniProtKB"/>
</dbReference>
<dbReference type="GO" id="GO:0061709">
    <property type="term" value="P:reticulophagy"/>
    <property type="evidence" value="ECO:0000250"/>
    <property type="project" value="UniProtKB"/>
</dbReference>
<dbReference type="CDD" id="cd01766">
    <property type="entry name" value="Ubl_UFM1"/>
    <property type="match status" value="1"/>
</dbReference>
<dbReference type="FunFam" id="3.10.20.90:FF:000044">
    <property type="entry name" value="Ubiquitin-fold modifier 1"/>
    <property type="match status" value="1"/>
</dbReference>
<dbReference type="Gene3D" id="3.10.20.90">
    <property type="entry name" value="Phosphatidylinositol 3-kinase Catalytic Subunit, Chain A, domain 1"/>
    <property type="match status" value="1"/>
</dbReference>
<dbReference type="InterPro" id="IPR029071">
    <property type="entry name" value="Ubiquitin-like_domsf"/>
</dbReference>
<dbReference type="InterPro" id="IPR005375">
    <property type="entry name" value="UFM1"/>
</dbReference>
<dbReference type="PANTHER" id="PTHR15825">
    <property type="entry name" value="UBIQUITIN-FOLD MODIFIER 1"/>
    <property type="match status" value="1"/>
</dbReference>
<dbReference type="PANTHER" id="PTHR15825:SF0">
    <property type="entry name" value="UBIQUITIN-FOLD MODIFIER 1"/>
    <property type="match status" value="1"/>
</dbReference>
<dbReference type="Pfam" id="PF03671">
    <property type="entry name" value="Ufm1"/>
    <property type="match status" value="1"/>
</dbReference>
<dbReference type="PIRSF" id="PIRSF038027">
    <property type="entry name" value="Ubiquitin-like_Ufm1"/>
    <property type="match status" value="1"/>
</dbReference>
<dbReference type="SUPFAM" id="SSF54236">
    <property type="entry name" value="Ubiquitin-like"/>
    <property type="match status" value="1"/>
</dbReference>
<evidence type="ECO:0000250" key="1">
    <source>
        <dbReference type="UniProtKB" id="P61960"/>
    </source>
</evidence>
<evidence type="ECO:0000305" key="2"/>